<gene>
    <name evidence="1" type="primary">mnmE</name>
    <name evidence="1" type="synonym">trmE</name>
    <name type="ordered locus">Pden_0003</name>
</gene>
<accession>A1AXX6</accession>
<sequence>MDTIFAEATPPGRGGVSVVRLSGPKAHATLESLAGPVATPRMAALRALRDGDDLIDRALVIWFAEGHSFTGEEVAELHLHGAPVIASRLSQALLARGLRRAEAGEFTKRAFLNGRIDLAEAEGLADLLSAETEAQRKLAMRATEGELGRKADELRSKLIRAGALIEASIDFADEEVPDEVPEEALDLIKAVRSDIQGMLASYPATERLRQGYEVAIIGPPNAGKSTLLNRIGQREIALVSEIAGTTRDILELHTDLRGLPVTFLDTAGLRESSDPVEAMGVARAVQRAAEADLRIHLSVDGVPEETLVLGDIIVRSKADLGRGEETAISGLTGEGVAELLDLVYDRLRVRAADSGLVGHKRQAEALQRAVAALAIDDSLAPEFLAEALRQAAQALAMMVGRVGAEDYLDEIFSSFCIGK</sequence>
<feature type="chain" id="PRO_0000345861" description="tRNA modification GTPase MnmE">
    <location>
        <begin position="1"/>
        <end position="419"/>
    </location>
</feature>
<feature type="domain" description="TrmE-type G">
    <location>
        <begin position="211"/>
        <end position="348"/>
    </location>
</feature>
<feature type="binding site" evidence="1">
    <location>
        <position position="20"/>
    </location>
    <ligand>
        <name>(6S)-5-formyl-5,6,7,8-tetrahydrofolate</name>
        <dbReference type="ChEBI" id="CHEBI:57457"/>
    </ligand>
</feature>
<feature type="binding site" evidence="1">
    <location>
        <position position="76"/>
    </location>
    <ligand>
        <name>(6S)-5-formyl-5,6,7,8-tetrahydrofolate</name>
        <dbReference type="ChEBI" id="CHEBI:57457"/>
    </ligand>
</feature>
<feature type="binding site" evidence="1">
    <location>
        <position position="115"/>
    </location>
    <ligand>
        <name>(6S)-5-formyl-5,6,7,8-tetrahydrofolate</name>
        <dbReference type="ChEBI" id="CHEBI:57457"/>
    </ligand>
</feature>
<feature type="binding site" evidence="1">
    <location>
        <begin position="221"/>
        <end position="226"/>
    </location>
    <ligand>
        <name>GTP</name>
        <dbReference type="ChEBI" id="CHEBI:37565"/>
    </ligand>
</feature>
<feature type="binding site" evidence="1">
    <location>
        <position position="221"/>
    </location>
    <ligand>
        <name>K(+)</name>
        <dbReference type="ChEBI" id="CHEBI:29103"/>
    </ligand>
</feature>
<feature type="binding site" evidence="1">
    <location>
        <position position="225"/>
    </location>
    <ligand>
        <name>Mg(2+)</name>
        <dbReference type="ChEBI" id="CHEBI:18420"/>
    </ligand>
</feature>
<feature type="binding site" evidence="1">
    <location>
        <begin position="240"/>
        <end position="246"/>
    </location>
    <ligand>
        <name>GTP</name>
        <dbReference type="ChEBI" id="CHEBI:37565"/>
    </ligand>
</feature>
<feature type="binding site" evidence="1">
    <location>
        <position position="240"/>
    </location>
    <ligand>
        <name>K(+)</name>
        <dbReference type="ChEBI" id="CHEBI:29103"/>
    </ligand>
</feature>
<feature type="binding site" evidence="1">
    <location>
        <position position="242"/>
    </location>
    <ligand>
        <name>K(+)</name>
        <dbReference type="ChEBI" id="CHEBI:29103"/>
    </ligand>
</feature>
<feature type="binding site" evidence="1">
    <location>
        <position position="245"/>
    </location>
    <ligand>
        <name>K(+)</name>
        <dbReference type="ChEBI" id="CHEBI:29103"/>
    </ligand>
</feature>
<feature type="binding site" evidence="1">
    <location>
        <position position="246"/>
    </location>
    <ligand>
        <name>Mg(2+)</name>
        <dbReference type="ChEBI" id="CHEBI:18420"/>
    </ligand>
</feature>
<feature type="binding site" evidence="1">
    <location>
        <begin position="265"/>
        <end position="268"/>
    </location>
    <ligand>
        <name>GTP</name>
        <dbReference type="ChEBI" id="CHEBI:37565"/>
    </ligand>
</feature>
<feature type="binding site" evidence="1">
    <location>
        <position position="419"/>
    </location>
    <ligand>
        <name>(6S)-5-formyl-5,6,7,8-tetrahydrofolate</name>
        <dbReference type="ChEBI" id="CHEBI:57457"/>
    </ligand>
</feature>
<protein>
    <recommendedName>
        <fullName evidence="1">tRNA modification GTPase MnmE</fullName>
        <ecNumber evidence="1">3.6.-.-</ecNumber>
    </recommendedName>
</protein>
<evidence type="ECO:0000255" key="1">
    <source>
        <dbReference type="HAMAP-Rule" id="MF_00379"/>
    </source>
</evidence>
<proteinExistence type="inferred from homology"/>
<name>MNME_PARDP</name>
<reference key="1">
    <citation type="submission" date="2006-12" db="EMBL/GenBank/DDBJ databases">
        <title>Complete sequence of chromosome 1 of Paracoccus denitrificans PD1222.</title>
        <authorList>
            <person name="Copeland A."/>
            <person name="Lucas S."/>
            <person name="Lapidus A."/>
            <person name="Barry K."/>
            <person name="Detter J.C."/>
            <person name="Glavina del Rio T."/>
            <person name="Hammon N."/>
            <person name="Israni S."/>
            <person name="Dalin E."/>
            <person name="Tice H."/>
            <person name="Pitluck S."/>
            <person name="Munk A.C."/>
            <person name="Brettin T."/>
            <person name="Bruce D."/>
            <person name="Han C."/>
            <person name="Tapia R."/>
            <person name="Gilna P."/>
            <person name="Schmutz J."/>
            <person name="Larimer F."/>
            <person name="Land M."/>
            <person name="Hauser L."/>
            <person name="Kyrpides N."/>
            <person name="Lykidis A."/>
            <person name="Spiro S."/>
            <person name="Richardson D.J."/>
            <person name="Moir J.W.B."/>
            <person name="Ferguson S.J."/>
            <person name="van Spanning R.J.M."/>
            <person name="Richardson P."/>
        </authorList>
    </citation>
    <scope>NUCLEOTIDE SEQUENCE [LARGE SCALE GENOMIC DNA]</scope>
    <source>
        <strain>Pd 1222</strain>
    </source>
</reference>
<keyword id="KW-0963">Cytoplasm</keyword>
<keyword id="KW-0342">GTP-binding</keyword>
<keyword id="KW-0378">Hydrolase</keyword>
<keyword id="KW-0460">Magnesium</keyword>
<keyword id="KW-0479">Metal-binding</keyword>
<keyword id="KW-0547">Nucleotide-binding</keyword>
<keyword id="KW-0630">Potassium</keyword>
<keyword id="KW-1185">Reference proteome</keyword>
<keyword id="KW-0819">tRNA processing</keyword>
<organism>
    <name type="scientific">Paracoccus denitrificans (strain Pd 1222)</name>
    <dbReference type="NCBI Taxonomy" id="318586"/>
    <lineage>
        <taxon>Bacteria</taxon>
        <taxon>Pseudomonadati</taxon>
        <taxon>Pseudomonadota</taxon>
        <taxon>Alphaproteobacteria</taxon>
        <taxon>Rhodobacterales</taxon>
        <taxon>Paracoccaceae</taxon>
        <taxon>Paracoccus</taxon>
    </lineage>
</organism>
<dbReference type="EC" id="3.6.-.-" evidence="1"/>
<dbReference type="EMBL" id="CP000489">
    <property type="protein sequence ID" value="ABL68120.1"/>
    <property type="molecule type" value="Genomic_DNA"/>
</dbReference>
<dbReference type="RefSeq" id="WP_011746353.1">
    <property type="nucleotide sequence ID" value="NC_008686.1"/>
</dbReference>
<dbReference type="SMR" id="A1AXX6"/>
<dbReference type="STRING" id="318586.Pden_0003"/>
<dbReference type="EnsemblBacteria" id="ABL68120">
    <property type="protein sequence ID" value="ABL68120"/>
    <property type="gene ID" value="Pden_0003"/>
</dbReference>
<dbReference type="GeneID" id="93451234"/>
<dbReference type="KEGG" id="pde:Pden_0003"/>
<dbReference type="eggNOG" id="COG0486">
    <property type="taxonomic scope" value="Bacteria"/>
</dbReference>
<dbReference type="HOGENOM" id="CLU_019624_3_1_5"/>
<dbReference type="OrthoDB" id="9805918at2"/>
<dbReference type="Proteomes" id="UP000000361">
    <property type="component" value="Chromosome 1"/>
</dbReference>
<dbReference type="GO" id="GO:0005737">
    <property type="term" value="C:cytoplasm"/>
    <property type="evidence" value="ECO:0007669"/>
    <property type="project" value="UniProtKB-SubCell"/>
</dbReference>
<dbReference type="GO" id="GO:0005525">
    <property type="term" value="F:GTP binding"/>
    <property type="evidence" value="ECO:0007669"/>
    <property type="project" value="UniProtKB-UniRule"/>
</dbReference>
<dbReference type="GO" id="GO:0003924">
    <property type="term" value="F:GTPase activity"/>
    <property type="evidence" value="ECO:0007669"/>
    <property type="project" value="UniProtKB-UniRule"/>
</dbReference>
<dbReference type="GO" id="GO:0046872">
    <property type="term" value="F:metal ion binding"/>
    <property type="evidence" value="ECO:0007669"/>
    <property type="project" value="UniProtKB-KW"/>
</dbReference>
<dbReference type="GO" id="GO:0030488">
    <property type="term" value="P:tRNA methylation"/>
    <property type="evidence" value="ECO:0007669"/>
    <property type="project" value="TreeGrafter"/>
</dbReference>
<dbReference type="GO" id="GO:0002098">
    <property type="term" value="P:tRNA wobble uridine modification"/>
    <property type="evidence" value="ECO:0007669"/>
    <property type="project" value="TreeGrafter"/>
</dbReference>
<dbReference type="CDD" id="cd04164">
    <property type="entry name" value="trmE"/>
    <property type="match status" value="1"/>
</dbReference>
<dbReference type="CDD" id="cd14858">
    <property type="entry name" value="TrmE_N"/>
    <property type="match status" value="1"/>
</dbReference>
<dbReference type="Gene3D" id="3.40.50.300">
    <property type="entry name" value="P-loop containing nucleotide triphosphate hydrolases"/>
    <property type="match status" value="1"/>
</dbReference>
<dbReference type="Gene3D" id="3.30.1360.120">
    <property type="entry name" value="Probable tRNA modification gtpase trme, domain 1"/>
    <property type="match status" value="1"/>
</dbReference>
<dbReference type="Gene3D" id="1.20.120.430">
    <property type="entry name" value="tRNA modification GTPase MnmE domain 2"/>
    <property type="match status" value="1"/>
</dbReference>
<dbReference type="HAMAP" id="MF_00379">
    <property type="entry name" value="GTPase_MnmE"/>
    <property type="match status" value="1"/>
</dbReference>
<dbReference type="InterPro" id="IPR031168">
    <property type="entry name" value="G_TrmE"/>
</dbReference>
<dbReference type="InterPro" id="IPR006073">
    <property type="entry name" value="GTP-bd"/>
</dbReference>
<dbReference type="InterPro" id="IPR018948">
    <property type="entry name" value="GTP-bd_TrmE_N"/>
</dbReference>
<dbReference type="InterPro" id="IPR004520">
    <property type="entry name" value="GTPase_MnmE"/>
</dbReference>
<dbReference type="InterPro" id="IPR027368">
    <property type="entry name" value="MnmE_dom2"/>
</dbReference>
<dbReference type="InterPro" id="IPR025867">
    <property type="entry name" value="MnmE_helical"/>
</dbReference>
<dbReference type="InterPro" id="IPR027417">
    <property type="entry name" value="P-loop_NTPase"/>
</dbReference>
<dbReference type="InterPro" id="IPR005225">
    <property type="entry name" value="Small_GTP-bd"/>
</dbReference>
<dbReference type="InterPro" id="IPR027266">
    <property type="entry name" value="TrmE/GcvT_dom1"/>
</dbReference>
<dbReference type="NCBIfam" id="TIGR00450">
    <property type="entry name" value="mnmE_trmE_thdF"/>
    <property type="match status" value="1"/>
</dbReference>
<dbReference type="NCBIfam" id="NF003661">
    <property type="entry name" value="PRK05291.1-3"/>
    <property type="match status" value="1"/>
</dbReference>
<dbReference type="NCBIfam" id="TIGR00231">
    <property type="entry name" value="small_GTP"/>
    <property type="match status" value="1"/>
</dbReference>
<dbReference type="PANTHER" id="PTHR42714">
    <property type="entry name" value="TRNA MODIFICATION GTPASE GTPBP3"/>
    <property type="match status" value="1"/>
</dbReference>
<dbReference type="PANTHER" id="PTHR42714:SF2">
    <property type="entry name" value="TRNA MODIFICATION GTPASE GTPBP3, MITOCHONDRIAL"/>
    <property type="match status" value="1"/>
</dbReference>
<dbReference type="Pfam" id="PF01926">
    <property type="entry name" value="MMR_HSR1"/>
    <property type="match status" value="1"/>
</dbReference>
<dbReference type="Pfam" id="PF12631">
    <property type="entry name" value="MnmE_helical"/>
    <property type="match status" value="1"/>
</dbReference>
<dbReference type="Pfam" id="PF10396">
    <property type="entry name" value="TrmE_N"/>
    <property type="match status" value="1"/>
</dbReference>
<dbReference type="PRINTS" id="PR00326">
    <property type="entry name" value="GTP1OBG"/>
</dbReference>
<dbReference type="SUPFAM" id="SSF52540">
    <property type="entry name" value="P-loop containing nucleoside triphosphate hydrolases"/>
    <property type="match status" value="1"/>
</dbReference>
<dbReference type="SUPFAM" id="SSF116878">
    <property type="entry name" value="TrmE connector domain"/>
    <property type="match status" value="1"/>
</dbReference>
<dbReference type="PROSITE" id="PS51709">
    <property type="entry name" value="G_TRME"/>
    <property type="match status" value="1"/>
</dbReference>
<comment type="function">
    <text evidence="1">Exhibits a very high intrinsic GTPase hydrolysis rate. Involved in the addition of a carboxymethylaminomethyl (cmnm) group at the wobble position (U34) of certain tRNAs, forming tRNA-cmnm(5)s(2)U34.</text>
</comment>
<comment type="cofactor">
    <cofactor evidence="1">
        <name>K(+)</name>
        <dbReference type="ChEBI" id="CHEBI:29103"/>
    </cofactor>
    <text evidence="1">Binds 1 potassium ion per subunit.</text>
</comment>
<comment type="subunit">
    <text evidence="1">Homodimer. Heterotetramer of two MnmE and two MnmG subunits.</text>
</comment>
<comment type="subcellular location">
    <subcellularLocation>
        <location evidence="1">Cytoplasm</location>
    </subcellularLocation>
</comment>
<comment type="similarity">
    <text evidence="1">Belongs to the TRAFAC class TrmE-Era-EngA-EngB-Septin-like GTPase superfamily. TrmE GTPase family.</text>
</comment>